<dbReference type="EC" id="5.4.99.12" evidence="1"/>
<dbReference type="EMBL" id="CP000048">
    <property type="protein sequence ID" value="AAX16538.1"/>
    <property type="molecule type" value="Genomic_DNA"/>
</dbReference>
<dbReference type="RefSeq" id="WP_012421795.1">
    <property type="nucleotide sequence ID" value="NZ_CP073136.1"/>
</dbReference>
<dbReference type="SMR" id="B2S1K1"/>
<dbReference type="KEGG" id="bhr:BH0012"/>
<dbReference type="HOGENOM" id="CLU_014673_0_1_12"/>
<dbReference type="Proteomes" id="UP000008834">
    <property type="component" value="Chromosome"/>
</dbReference>
<dbReference type="GO" id="GO:0003723">
    <property type="term" value="F:RNA binding"/>
    <property type="evidence" value="ECO:0007669"/>
    <property type="project" value="InterPro"/>
</dbReference>
<dbReference type="GO" id="GO:0160147">
    <property type="term" value="F:tRNA pseudouridine(38-40) synthase activity"/>
    <property type="evidence" value="ECO:0007669"/>
    <property type="project" value="UniProtKB-EC"/>
</dbReference>
<dbReference type="GO" id="GO:0031119">
    <property type="term" value="P:tRNA pseudouridine synthesis"/>
    <property type="evidence" value="ECO:0007669"/>
    <property type="project" value="UniProtKB-UniRule"/>
</dbReference>
<dbReference type="CDD" id="cd02570">
    <property type="entry name" value="PseudoU_synth_EcTruA"/>
    <property type="match status" value="1"/>
</dbReference>
<dbReference type="FunFam" id="3.30.70.580:FF:000001">
    <property type="entry name" value="tRNA pseudouridine synthase A"/>
    <property type="match status" value="1"/>
</dbReference>
<dbReference type="Gene3D" id="3.30.70.660">
    <property type="entry name" value="Pseudouridine synthase I, catalytic domain, C-terminal subdomain"/>
    <property type="match status" value="1"/>
</dbReference>
<dbReference type="Gene3D" id="3.30.70.580">
    <property type="entry name" value="Pseudouridine synthase I, catalytic domain, N-terminal subdomain"/>
    <property type="match status" value="1"/>
</dbReference>
<dbReference type="HAMAP" id="MF_00171">
    <property type="entry name" value="TruA"/>
    <property type="match status" value="1"/>
</dbReference>
<dbReference type="InterPro" id="IPR020103">
    <property type="entry name" value="PsdUridine_synth_cat_dom_sf"/>
</dbReference>
<dbReference type="InterPro" id="IPR001406">
    <property type="entry name" value="PsdUridine_synth_TruA"/>
</dbReference>
<dbReference type="InterPro" id="IPR020097">
    <property type="entry name" value="PsdUridine_synth_TruA_a/b_dom"/>
</dbReference>
<dbReference type="InterPro" id="IPR020095">
    <property type="entry name" value="PsdUridine_synth_TruA_C"/>
</dbReference>
<dbReference type="InterPro" id="IPR020094">
    <property type="entry name" value="TruA/RsuA/RluB/E/F_N"/>
</dbReference>
<dbReference type="NCBIfam" id="TIGR00071">
    <property type="entry name" value="hisT_truA"/>
    <property type="match status" value="1"/>
</dbReference>
<dbReference type="PANTHER" id="PTHR11142">
    <property type="entry name" value="PSEUDOURIDYLATE SYNTHASE"/>
    <property type="match status" value="1"/>
</dbReference>
<dbReference type="PANTHER" id="PTHR11142:SF0">
    <property type="entry name" value="TRNA PSEUDOURIDINE SYNTHASE-LIKE 1"/>
    <property type="match status" value="1"/>
</dbReference>
<dbReference type="Pfam" id="PF01416">
    <property type="entry name" value="PseudoU_synth_1"/>
    <property type="match status" value="2"/>
</dbReference>
<dbReference type="PIRSF" id="PIRSF001430">
    <property type="entry name" value="tRNA_psdUrid_synth"/>
    <property type="match status" value="1"/>
</dbReference>
<dbReference type="SUPFAM" id="SSF55120">
    <property type="entry name" value="Pseudouridine synthase"/>
    <property type="match status" value="1"/>
</dbReference>
<reference key="1">
    <citation type="submission" date="2004-12" db="EMBL/GenBank/DDBJ databases">
        <title>The genome sequence of Borrelia hermsii and Borrelia turicatae: comparative analysis of two agents of endemic N. America relapsing fever.</title>
        <authorList>
            <person name="Porcella S.F."/>
            <person name="Raffel S.J."/>
            <person name="Schrumpf M.E."/>
            <person name="Montgomery B."/>
            <person name="Smith T."/>
            <person name="Schwan T.G."/>
        </authorList>
    </citation>
    <scope>NUCLEOTIDE SEQUENCE [LARGE SCALE GENOMIC DNA]</scope>
    <source>
        <strain>HS1 / DAH</strain>
    </source>
</reference>
<protein>
    <recommendedName>
        <fullName evidence="1">tRNA pseudouridine synthase A</fullName>
        <ecNumber evidence="1">5.4.99.12</ecNumber>
    </recommendedName>
    <alternativeName>
        <fullName evidence="1">tRNA pseudouridine(38-40) synthase</fullName>
    </alternativeName>
    <alternativeName>
        <fullName evidence="1">tRNA pseudouridylate synthase I</fullName>
    </alternativeName>
    <alternativeName>
        <fullName evidence="1">tRNA-uridine isomerase I</fullName>
    </alternativeName>
</protein>
<evidence type="ECO:0000255" key="1">
    <source>
        <dbReference type="HAMAP-Rule" id="MF_00171"/>
    </source>
</evidence>
<organism>
    <name type="scientific">Borrelia hermsii (strain HS1 / DAH)</name>
    <dbReference type="NCBI Taxonomy" id="314723"/>
    <lineage>
        <taxon>Bacteria</taxon>
        <taxon>Pseudomonadati</taxon>
        <taxon>Spirochaetota</taxon>
        <taxon>Spirochaetia</taxon>
        <taxon>Spirochaetales</taxon>
        <taxon>Borreliaceae</taxon>
        <taxon>Borrelia</taxon>
    </lineage>
</organism>
<gene>
    <name evidence="1" type="primary">truA</name>
    <name type="ordered locus">BH0012</name>
</gene>
<name>TRUA_BORHD</name>
<comment type="function">
    <text evidence="1">Formation of pseudouridine at positions 38, 39 and 40 in the anticodon stem and loop of transfer RNAs.</text>
</comment>
<comment type="catalytic activity">
    <reaction evidence="1">
        <text>uridine(38/39/40) in tRNA = pseudouridine(38/39/40) in tRNA</text>
        <dbReference type="Rhea" id="RHEA:22376"/>
        <dbReference type="Rhea" id="RHEA-COMP:10085"/>
        <dbReference type="Rhea" id="RHEA-COMP:10087"/>
        <dbReference type="ChEBI" id="CHEBI:65314"/>
        <dbReference type="ChEBI" id="CHEBI:65315"/>
        <dbReference type="EC" id="5.4.99.12"/>
    </reaction>
</comment>
<comment type="subunit">
    <text evidence="1">Homodimer.</text>
</comment>
<comment type="similarity">
    <text evidence="1">Belongs to the tRNA pseudouridine synthase TruA family.</text>
</comment>
<feature type="chain" id="PRO_1000097721" description="tRNA pseudouridine synthase A">
    <location>
        <begin position="1"/>
        <end position="245"/>
    </location>
</feature>
<feature type="active site" description="Nucleophile" evidence="1">
    <location>
        <position position="52"/>
    </location>
</feature>
<feature type="binding site" evidence="1">
    <location>
        <position position="110"/>
    </location>
    <ligand>
        <name>substrate</name>
    </ligand>
</feature>
<accession>B2S1K1</accession>
<sequence>MKKILAEIAYDGSLYYGFQIQPTKPTIQGEIEKALEKISKTKVKVHSAGRTDKGVHARGQIISFYIRINIKLKNLKTAINSLLRKDIRIIKLKYVADEFQPRFNAKRRKYSYYILNNENHYPWEGYQAYYVKKKLNINRLNEMAKMLIGIHDFTTFSCIKDQTNSKLKKIYFARFKKKNKLIIFEIIGSSFLWKMVRSIVGTIIDIEIKNEPVYTFKKILNSKNRKFTRTTAPAKALFLDKVFYE</sequence>
<keyword id="KW-0413">Isomerase</keyword>
<keyword id="KW-0819">tRNA processing</keyword>
<proteinExistence type="inferred from homology"/>